<accession>Q9DC37</accession>
<accession>Q3UWU0</accession>
<accession>Q8BVZ3</accession>
<sequence length="464" mass="51396">MEDEDGEDRALLGGRREADSAVHGAPRALSALCDPSRLAHRLVVLSLMCFLGFGSYFCYDNPAALQTQVKRDMQVNTTKFMLLYAWYSWPNVVLCFLGGFLIDRIFGIRWGTVIFSCFVCIGQVIFALGGIFNAFWLMELGRFVFGIGGESLAVAQNTYAVSWFKGKELNLVFGLQLSMARIGSTVNMNLMGWLYGKIEALLGSAGHMTLGVTLMIGCITCIFSLICALALAYLDRRAEKILHKEQGKTGEVIKLRDIKDFSLPLILVFVICVCYYVAVFPFIGLGKVFFMEKFRFSSQSASAINSIVYIISAPMSPLFGLLVDKTGKNIIWVLYAVAATLVSHMMLAFTFWNPWIAMCLLGFSYSLLACALWPMVAFIVPEHQLGTAYGFMQSIQNLGLAVIAILAGMILDSKGYLLLEVFFIACVSLSLLAVVCLYLVNRAQGGNLNYSAKQRERMKLSHPE</sequence>
<gene>
    <name evidence="9" type="primary">Mfsd1</name>
</gene>
<reference key="1">
    <citation type="journal article" date="2005" name="Science">
        <title>The transcriptional landscape of the mammalian genome.</title>
        <authorList>
            <person name="Carninci P."/>
            <person name="Kasukawa T."/>
            <person name="Katayama S."/>
            <person name="Gough J."/>
            <person name="Frith M.C."/>
            <person name="Maeda N."/>
            <person name="Oyama R."/>
            <person name="Ravasi T."/>
            <person name="Lenhard B."/>
            <person name="Wells C."/>
            <person name="Kodzius R."/>
            <person name="Shimokawa K."/>
            <person name="Bajic V.B."/>
            <person name="Brenner S.E."/>
            <person name="Batalov S."/>
            <person name="Forrest A.R."/>
            <person name="Zavolan M."/>
            <person name="Davis M.J."/>
            <person name="Wilming L.G."/>
            <person name="Aidinis V."/>
            <person name="Allen J.E."/>
            <person name="Ambesi-Impiombato A."/>
            <person name="Apweiler R."/>
            <person name="Aturaliya R.N."/>
            <person name="Bailey T.L."/>
            <person name="Bansal M."/>
            <person name="Baxter L."/>
            <person name="Beisel K.W."/>
            <person name="Bersano T."/>
            <person name="Bono H."/>
            <person name="Chalk A.M."/>
            <person name="Chiu K.P."/>
            <person name="Choudhary V."/>
            <person name="Christoffels A."/>
            <person name="Clutterbuck D.R."/>
            <person name="Crowe M.L."/>
            <person name="Dalla E."/>
            <person name="Dalrymple B.P."/>
            <person name="de Bono B."/>
            <person name="Della Gatta G."/>
            <person name="di Bernardo D."/>
            <person name="Down T."/>
            <person name="Engstrom P."/>
            <person name="Fagiolini M."/>
            <person name="Faulkner G."/>
            <person name="Fletcher C.F."/>
            <person name="Fukushima T."/>
            <person name="Furuno M."/>
            <person name="Futaki S."/>
            <person name="Gariboldi M."/>
            <person name="Georgii-Hemming P."/>
            <person name="Gingeras T.R."/>
            <person name="Gojobori T."/>
            <person name="Green R.E."/>
            <person name="Gustincich S."/>
            <person name="Harbers M."/>
            <person name="Hayashi Y."/>
            <person name="Hensch T.K."/>
            <person name="Hirokawa N."/>
            <person name="Hill D."/>
            <person name="Huminiecki L."/>
            <person name="Iacono M."/>
            <person name="Ikeo K."/>
            <person name="Iwama A."/>
            <person name="Ishikawa T."/>
            <person name="Jakt M."/>
            <person name="Kanapin A."/>
            <person name="Katoh M."/>
            <person name="Kawasawa Y."/>
            <person name="Kelso J."/>
            <person name="Kitamura H."/>
            <person name="Kitano H."/>
            <person name="Kollias G."/>
            <person name="Krishnan S.P."/>
            <person name="Kruger A."/>
            <person name="Kummerfeld S.K."/>
            <person name="Kurochkin I.V."/>
            <person name="Lareau L.F."/>
            <person name="Lazarevic D."/>
            <person name="Lipovich L."/>
            <person name="Liu J."/>
            <person name="Liuni S."/>
            <person name="McWilliam S."/>
            <person name="Madan Babu M."/>
            <person name="Madera M."/>
            <person name="Marchionni L."/>
            <person name="Matsuda H."/>
            <person name="Matsuzawa S."/>
            <person name="Miki H."/>
            <person name="Mignone F."/>
            <person name="Miyake S."/>
            <person name="Morris K."/>
            <person name="Mottagui-Tabar S."/>
            <person name="Mulder N."/>
            <person name="Nakano N."/>
            <person name="Nakauchi H."/>
            <person name="Ng P."/>
            <person name="Nilsson R."/>
            <person name="Nishiguchi S."/>
            <person name="Nishikawa S."/>
            <person name="Nori F."/>
            <person name="Ohara O."/>
            <person name="Okazaki Y."/>
            <person name="Orlando V."/>
            <person name="Pang K.C."/>
            <person name="Pavan W.J."/>
            <person name="Pavesi G."/>
            <person name="Pesole G."/>
            <person name="Petrovsky N."/>
            <person name="Piazza S."/>
            <person name="Reed J."/>
            <person name="Reid J.F."/>
            <person name="Ring B.Z."/>
            <person name="Ringwald M."/>
            <person name="Rost B."/>
            <person name="Ruan Y."/>
            <person name="Salzberg S.L."/>
            <person name="Sandelin A."/>
            <person name="Schneider C."/>
            <person name="Schoenbach C."/>
            <person name="Sekiguchi K."/>
            <person name="Semple C.A."/>
            <person name="Seno S."/>
            <person name="Sessa L."/>
            <person name="Sheng Y."/>
            <person name="Shibata Y."/>
            <person name="Shimada H."/>
            <person name="Shimada K."/>
            <person name="Silva D."/>
            <person name="Sinclair B."/>
            <person name="Sperling S."/>
            <person name="Stupka E."/>
            <person name="Sugiura K."/>
            <person name="Sultana R."/>
            <person name="Takenaka Y."/>
            <person name="Taki K."/>
            <person name="Tammoja K."/>
            <person name="Tan S.L."/>
            <person name="Tang S."/>
            <person name="Taylor M.S."/>
            <person name="Tegner J."/>
            <person name="Teichmann S.A."/>
            <person name="Ueda H.R."/>
            <person name="van Nimwegen E."/>
            <person name="Verardo R."/>
            <person name="Wei C.L."/>
            <person name="Yagi K."/>
            <person name="Yamanishi H."/>
            <person name="Zabarovsky E."/>
            <person name="Zhu S."/>
            <person name="Zimmer A."/>
            <person name="Hide W."/>
            <person name="Bult C."/>
            <person name="Grimmond S.M."/>
            <person name="Teasdale R.D."/>
            <person name="Liu E.T."/>
            <person name="Brusic V."/>
            <person name="Quackenbush J."/>
            <person name="Wahlestedt C."/>
            <person name="Mattick J.S."/>
            <person name="Hume D.A."/>
            <person name="Kai C."/>
            <person name="Sasaki D."/>
            <person name="Tomaru Y."/>
            <person name="Fukuda S."/>
            <person name="Kanamori-Katayama M."/>
            <person name="Suzuki M."/>
            <person name="Aoki J."/>
            <person name="Arakawa T."/>
            <person name="Iida J."/>
            <person name="Imamura K."/>
            <person name="Itoh M."/>
            <person name="Kato T."/>
            <person name="Kawaji H."/>
            <person name="Kawagashira N."/>
            <person name="Kawashima T."/>
            <person name="Kojima M."/>
            <person name="Kondo S."/>
            <person name="Konno H."/>
            <person name="Nakano K."/>
            <person name="Ninomiya N."/>
            <person name="Nishio T."/>
            <person name="Okada M."/>
            <person name="Plessy C."/>
            <person name="Shibata K."/>
            <person name="Shiraki T."/>
            <person name="Suzuki S."/>
            <person name="Tagami M."/>
            <person name="Waki K."/>
            <person name="Watahiki A."/>
            <person name="Okamura-Oho Y."/>
            <person name="Suzuki H."/>
            <person name="Kawai J."/>
            <person name="Hayashizaki Y."/>
        </authorList>
    </citation>
    <scope>NUCLEOTIDE SEQUENCE [LARGE SCALE MRNA]</scope>
    <source>
        <strain>C57BL/6J</strain>
        <tissue>Bone marrow</tissue>
        <tissue>Egg</tissue>
        <tissue>Lung</tissue>
        <tissue>Tongue</tissue>
        <tissue>Wolffian duct</tissue>
    </source>
</reference>
<reference key="2">
    <citation type="journal article" date="2004" name="Genome Res.">
        <title>The status, quality, and expansion of the NIH full-length cDNA project: the Mammalian Gene Collection (MGC).</title>
        <authorList>
            <consortium name="The MGC Project Team"/>
        </authorList>
    </citation>
    <scope>NUCLEOTIDE SEQUENCE [LARGE SCALE MRNA]</scope>
    <source>
        <strain>Czech II</strain>
        <tissue>Mammary tumor</tissue>
    </source>
</reference>
<reference key="3">
    <citation type="journal article" date="2009" name="Immunity">
        <title>The phagosomal proteome in interferon-gamma-activated macrophages.</title>
        <authorList>
            <person name="Trost M."/>
            <person name="English L."/>
            <person name="Lemieux S."/>
            <person name="Courcelles M."/>
            <person name="Desjardins M."/>
            <person name="Thibault P."/>
        </authorList>
    </citation>
    <scope>PHOSPHORYLATION [LARGE SCALE ANALYSIS] AT SER-20</scope>
    <scope>IDENTIFICATION BY MASS SPECTROMETRY [LARGE SCALE ANALYSIS]</scope>
</reference>
<reference key="4">
    <citation type="journal article" date="2017" name="J. Mol. Neurosci.">
        <title>The Novel Membrane-Bound Proteins MFSD1 and MFSD3 are Putative SLC Transporters Affected by Altered Nutrient Intake.</title>
        <authorList>
            <person name="Perland E."/>
            <person name="Hellsten S.V."/>
            <person name="Lekholm E."/>
            <person name="Eriksson M.M."/>
            <person name="Arapi V."/>
            <person name="Fredriksson R."/>
        </authorList>
    </citation>
    <scope>TISSUE SPECIFICITY</scope>
    <scope>INDUCTION</scope>
</reference>
<reference key="5">
    <citation type="journal article" date="2019" name="Elife">
        <title>The lysosomal transporter MFSD1 is essential for liver homeostasis and critically depends on its accessory subunit GLMP.</title>
        <authorList>
            <person name="Massa Lopez D."/>
            <person name="Thelen M."/>
            <person name="Stahl F."/>
            <person name="Thiel C."/>
            <person name="Linhorst A."/>
            <person name="Sylvester M."/>
            <person name="Hermanns-Borgmeyer I."/>
            <person name="Luellmann-Rauch R."/>
            <person name="Eskild W."/>
            <person name="Saftig P."/>
            <person name="Damme M."/>
        </authorList>
    </citation>
    <scope>FUNCTION</scope>
    <scope>INTERACTION WITH GLMP</scope>
    <scope>SUBCELLULAR LOCATION</scope>
    <scope>TISSUE SPECIFICITY</scope>
    <scope>DOMAIN</scope>
    <scope>LACK OF GLYCOSYLATION</scope>
    <scope>DISRUPTION PHENOTYPE</scope>
    <scope>MOTIF</scope>
    <scope>MUTAGENESIS OF 11-LEU-LEU-12; ASN-76 AND ASN-449</scope>
</reference>
<reference key="6">
    <citation type="journal article" date="2020" name="FASEB J.">
        <title>Characterization of the complex of the lysosomal membrane transporter MFSD1 and its accessory subunit GLMP.</title>
        <authorList>
            <person name="Lopez D.M."/>
            <person name="Kaehlau L."/>
            <person name="Jungnickel K.E.J."/>
            <person name="Loew C."/>
            <person name="Damme M."/>
        </authorList>
    </citation>
    <scope>FUNCTION</scope>
    <scope>HOMODIMERIZATION</scope>
    <scope>INTERACTION WITH GLMP</scope>
    <scope>SUBCELLULAR LOCATION</scope>
    <scope>DISRUPTION PHENOTYPE</scope>
    <scope>MUTAGENESIS OF 11-LEU-LEU-12</scope>
</reference>
<reference key="7">
    <citation type="journal article" date="2024" name="Proc. Natl. Acad. Sci. U.S.A.">
        <title>Orphan lysosomal solute carrier MFSD1 facilitates highly selective dipeptide transport.</title>
        <authorList>
            <person name="Boytsov D."/>
            <person name="Madej G.M."/>
            <person name="Horn G."/>
            <person name="Blaha N."/>
            <person name="Koecher T."/>
            <person name="Sitte H.H."/>
            <person name="Siekhaus D."/>
            <person name="Ziegler C."/>
            <person name="Sandtner W."/>
            <person name="Roblek M."/>
        </authorList>
    </citation>
    <scope>FUNCTION</scope>
    <scope>SUBCELLULAR LOCATION</scope>
</reference>
<name>MFSD1_MOUSE</name>
<keyword id="KW-0002">3D-structure</keyword>
<keyword id="KW-0458">Lysosome</keyword>
<keyword id="KW-0472">Membrane</keyword>
<keyword id="KW-0597">Phosphoprotein</keyword>
<keyword id="KW-1185">Reference proteome</keyword>
<keyword id="KW-0812">Transmembrane</keyword>
<keyword id="KW-1133">Transmembrane helix</keyword>
<keyword id="KW-0813">Transport</keyword>
<feature type="chain" id="PRO_0000273383" description="Lysosomal dipeptide transporter MFSD1">
    <location>
        <begin position="1"/>
        <end position="464"/>
    </location>
</feature>
<feature type="transmembrane region" description="Helical" evidence="2">
    <location>
        <begin position="38"/>
        <end position="58"/>
    </location>
</feature>
<feature type="transmembrane region" description="Helical" evidence="2">
    <location>
        <begin position="82"/>
        <end position="102"/>
    </location>
</feature>
<feature type="transmembrane region" description="Helical" evidence="2">
    <location>
        <begin position="112"/>
        <end position="132"/>
    </location>
</feature>
<feature type="transmembrane region" description="Helical" evidence="2">
    <location>
        <begin position="134"/>
        <end position="154"/>
    </location>
</feature>
<feature type="transmembrane region" description="Helical" evidence="2">
    <location>
        <begin position="190"/>
        <end position="210"/>
    </location>
</feature>
<feature type="transmembrane region" description="Helical" evidence="2">
    <location>
        <begin position="214"/>
        <end position="234"/>
    </location>
</feature>
<feature type="transmembrane region" description="Helical" evidence="2">
    <location>
        <begin position="265"/>
        <end position="285"/>
    </location>
</feature>
<feature type="transmembrane region" description="Helical" evidence="2">
    <location>
        <begin position="303"/>
        <end position="323"/>
    </location>
</feature>
<feature type="transmembrane region" description="Helical" evidence="2">
    <location>
        <begin position="330"/>
        <end position="350"/>
    </location>
</feature>
<feature type="transmembrane region" description="Helical" evidence="2">
    <location>
        <begin position="360"/>
        <end position="380"/>
    </location>
</feature>
<feature type="transmembrane region" description="Helical" evidence="2">
    <location>
        <begin position="391"/>
        <end position="411"/>
    </location>
</feature>
<feature type="transmembrane region" description="Helical" evidence="2">
    <location>
        <begin position="417"/>
        <end position="437"/>
    </location>
</feature>
<feature type="short sequence motif" description="Dileucine internalization motif" evidence="4">
    <location>
        <begin position="11"/>
        <end position="12"/>
    </location>
</feature>
<feature type="modified residue" description="Phosphoserine" evidence="10">
    <location>
        <position position="20"/>
    </location>
</feature>
<feature type="mutagenesis site" description="Mislocalization to the plasma membrane. Localizes to lysosomes when expressed with wild-type Glmp." evidence="4 5">
    <original>LL</original>
    <variation>AA</variation>
    <location>
        <begin position="11"/>
        <end position="12"/>
    </location>
</feature>
<feature type="mutagenesis site" description="No change in molecular weight, indicating lack of N-glycosylation." evidence="4">
    <original>N</original>
    <variation>A</variation>
    <location>
        <position position="76"/>
    </location>
</feature>
<feature type="mutagenesis site" description="No change in molecular weight, indicating lack of N-glycosylation." evidence="4">
    <original>N</original>
    <variation>A</variation>
    <location>
        <position position="449"/>
    </location>
</feature>
<feature type="sequence conflict" description="In Ref. 1; BAC36010." evidence="7" ref="1">
    <original>E</original>
    <variation>Q</variation>
    <location>
        <position position="2"/>
    </location>
</feature>
<feature type="sequence conflict" description="In Ref. 1; BAE22824." evidence="7" ref="1">
    <original>A</original>
    <variation>T</variation>
    <location>
        <position position="371"/>
    </location>
</feature>
<comment type="function">
    <text evidence="1 4 6">Lysosomal dipeptide uniporter that selectively exports lysine, arginine or histidine-containing dipeptides with a net positive charge from the lysosome lumen into the cytosol (PubMed:38507452). Could play a role in a specific type of protein O-glycosylation indirectly regulating macrophages migration and tissue invasion (By similarity). Also essential for liver homeostasis (PubMed:31661432).</text>
</comment>
<comment type="catalytic activity">
    <reaction evidence="1">
        <text>L-alpha-aminoacyl-L-arginine(out) = L-alpha-aminoacyl-L-arginine(in)</text>
        <dbReference type="Rhea" id="RHEA:79367"/>
        <dbReference type="ChEBI" id="CHEBI:229968"/>
    </reaction>
</comment>
<comment type="catalytic activity">
    <reaction evidence="1">
        <text>L-arginyl-L-alpha-amino acid(out) = L-arginyl-L-alpha-amino acid(in)</text>
        <dbReference type="Rhea" id="RHEA:79371"/>
        <dbReference type="ChEBI" id="CHEBI:84315"/>
    </reaction>
</comment>
<comment type="catalytic activity">
    <reaction evidence="1">
        <text>L-arginyl-glycine(out) = L-arginyl-glycine(in)</text>
        <dbReference type="Rhea" id="RHEA:79391"/>
        <dbReference type="ChEBI" id="CHEBI:229955"/>
    </reaction>
</comment>
<comment type="catalytic activity">
    <reaction evidence="1">
        <text>L-alpha-aminoacyl-L-lysine(out) = L-alpha-aminoacyl-L-lysine(in)</text>
        <dbReference type="Rhea" id="RHEA:79383"/>
        <dbReference type="ChEBI" id="CHEBI:229966"/>
    </reaction>
</comment>
<comment type="catalytic activity">
    <reaction evidence="1">
        <text>L-aspartyl-L-lysine(out) = L-aspartyl-L-lysine(in)</text>
        <dbReference type="Rhea" id="RHEA:79411"/>
        <dbReference type="ChEBI" id="CHEBI:229953"/>
    </reaction>
</comment>
<comment type="catalytic activity">
    <reaction evidence="1">
        <text>L-alanyl-L-lysine(out) = L-alanyl-L-lysine(in)</text>
        <dbReference type="Rhea" id="RHEA:79415"/>
        <dbReference type="ChEBI" id="CHEBI:192470"/>
    </reaction>
</comment>
<comment type="catalytic activity">
    <reaction evidence="1">
        <text>L-lysyl-L-alpha-amino acid(out) = L-lysyl-L-alpha-amino acid(in)</text>
        <dbReference type="Rhea" id="RHEA:79387"/>
        <dbReference type="ChEBI" id="CHEBI:229965"/>
    </reaction>
</comment>
<comment type="catalytic activity">
    <reaction evidence="1">
        <text>L-lysyl-L-alanine(out) = L-lysyl-L-alanine(in)</text>
        <dbReference type="Rhea" id="RHEA:79399"/>
        <dbReference type="ChEBI" id="CHEBI:229954"/>
    </reaction>
</comment>
<comment type="catalytic activity">
    <reaction evidence="1">
        <text>L-lysyl-L-lysine(out) = L-lysyl-L-lysine(in)</text>
        <dbReference type="Rhea" id="RHEA:79403"/>
        <dbReference type="ChEBI" id="CHEBI:229956"/>
    </reaction>
</comment>
<comment type="catalytic activity">
    <reaction evidence="1">
        <text>L-lysyl-glycine(out) = L-lysyl-glycine(in)</text>
        <dbReference type="Rhea" id="RHEA:79407"/>
        <dbReference type="ChEBI" id="CHEBI:191202"/>
    </reaction>
</comment>
<comment type="catalytic activity">
    <reaction evidence="1">
        <text>L-alpha-aminoacyl-L-histidine(out) = L-alpha-aminoacyl-L-histidine(in)</text>
        <dbReference type="Rhea" id="RHEA:79375"/>
        <dbReference type="ChEBI" id="CHEBI:229967"/>
    </reaction>
</comment>
<comment type="catalytic activity">
    <reaction evidence="1">
        <text>L-histidyl-L-alpha-amino acid(out) = L-histidyl-L-alpha-amino acid(in)</text>
        <dbReference type="Rhea" id="RHEA:79379"/>
        <dbReference type="ChEBI" id="CHEBI:229964"/>
    </reaction>
</comment>
<comment type="catalytic activity">
    <reaction evidence="1">
        <text>L-histidyl-glycine(out) = L-histidyl-glycine(in)</text>
        <dbReference type="Rhea" id="RHEA:79395"/>
        <dbReference type="ChEBI" id="CHEBI:229957"/>
    </reaction>
</comment>
<comment type="subunit">
    <text evidence="4 5">Homodimer (PubMed:32959924). Interacts with lysosomal protein GLMP (via lumenal domain); the interaction starts while both proteins are still in the endoplasmic reticulum and is required for stabilization of MFSD1 in lysosomes but has no direct effect on its targeting to lysosomes or transporter activity (PubMed:31661432, PubMed:32959924).</text>
</comment>
<comment type="subcellular location">
    <subcellularLocation>
        <location evidence="4 5 6">Lysosome membrane</location>
        <topology evidence="2">Multi-pass membrane protein</topology>
    </subcellularLocation>
</comment>
<comment type="tissue specificity">
    <text evidence="3 4">In brain, expressed in the cortex, striatum hippocampus, hypothalamus, thalamus and brainstem (at protein level) (PubMed:27981419). Widely expressed with highest levels in kidney and spleen (at protein level) (PubMed:31661432).</text>
</comment>
<comment type="induction">
    <text evidence="3">After 24 hours of starvation, up-regulated in the brainstem and down-regulated in the cortex and striatum (PubMed:27981419). Following 8 weeks of high-fat diet, down-regulated in brainstem and hypothalamus (PubMed:27981419).</text>
</comment>
<comment type="domain">
    <text evidence="4">The dileucine internalization motif is required for lysosomal localization.</text>
</comment>
<comment type="PTM">
    <text evidence="4">Not N-glycosylated.</text>
</comment>
<comment type="disruption phenotype">
    <text evidence="4 5">Splenomegaly and development of severe liver disease characterized by extravasation of erythrocytes, sinusoidal damage, loss of liver sinusoidal endothelial cells (LSECs) and fibrosis (PubMed:31661432). Normal life span but there is a significantly higher occurrence of liver tumors in old animals of more than 1.5 years of age (PubMed:31661432). Significantly reduced levels of Glmp (PubMed:31661432, PubMed:32959924). Conditional knockout in LSECs results in a tuberous liver appearance (PubMed:31661432).</text>
</comment>
<comment type="similarity">
    <text evidence="7">Belongs to the major facilitator superfamily.</text>
</comment>
<organism>
    <name type="scientific">Mus musculus</name>
    <name type="common">Mouse</name>
    <dbReference type="NCBI Taxonomy" id="10090"/>
    <lineage>
        <taxon>Eukaryota</taxon>
        <taxon>Metazoa</taxon>
        <taxon>Chordata</taxon>
        <taxon>Craniata</taxon>
        <taxon>Vertebrata</taxon>
        <taxon>Euteleostomi</taxon>
        <taxon>Mammalia</taxon>
        <taxon>Eutheria</taxon>
        <taxon>Euarchontoglires</taxon>
        <taxon>Glires</taxon>
        <taxon>Rodentia</taxon>
        <taxon>Myomorpha</taxon>
        <taxon>Muroidea</taxon>
        <taxon>Muridae</taxon>
        <taxon>Murinae</taxon>
        <taxon>Mus</taxon>
        <taxon>Mus</taxon>
    </lineage>
</organism>
<evidence type="ECO:0000250" key="1">
    <source>
        <dbReference type="UniProtKB" id="Q9H3U5"/>
    </source>
</evidence>
<evidence type="ECO:0000255" key="2"/>
<evidence type="ECO:0000269" key="3">
    <source>
    </source>
</evidence>
<evidence type="ECO:0000269" key="4">
    <source>
    </source>
</evidence>
<evidence type="ECO:0000269" key="5">
    <source>
    </source>
</evidence>
<evidence type="ECO:0000269" key="6">
    <source>
    </source>
</evidence>
<evidence type="ECO:0000305" key="7"/>
<evidence type="ECO:0000305" key="8">
    <source>
    </source>
</evidence>
<evidence type="ECO:0000312" key="9">
    <source>
        <dbReference type="MGI" id="MGI:1914118"/>
    </source>
</evidence>
<evidence type="ECO:0007744" key="10">
    <source>
    </source>
</evidence>
<proteinExistence type="evidence at protein level"/>
<dbReference type="EMBL" id="AK004586">
    <property type="protein sequence ID" value="BAB23391.1"/>
    <property type="molecule type" value="mRNA"/>
</dbReference>
<dbReference type="EMBL" id="AK075859">
    <property type="protein sequence ID" value="BAC36010.1"/>
    <property type="molecule type" value="mRNA"/>
</dbReference>
<dbReference type="EMBL" id="AK135235">
    <property type="protein sequence ID" value="BAE22467.1"/>
    <property type="molecule type" value="mRNA"/>
</dbReference>
<dbReference type="EMBL" id="AK136108">
    <property type="protein sequence ID" value="BAE22824.1"/>
    <property type="molecule type" value="mRNA"/>
</dbReference>
<dbReference type="EMBL" id="AK152444">
    <property type="protein sequence ID" value="BAE31224.1"/>
    <property type="molecule type" value="mRNA"/>
</dbReference>
<dbReference type="EMBL" id="AK159554">
    <property type="protein sequence ID" value="BAE35179.1"/>
    <property type="molecule type" value="mRNA"/>
</dbReference>
<dbReference type="EMBL" id="BC024891">
    <property type="protein sequence ID" value="AAH24891.1"/>
    <property type="molecule type" value="mRNA"/>
</dbReference>
<dbReference type="CCDS" id="CCDS38450.1"/>
<dbReference type="RefSeq" id="NP_080089.1">
    <property type="nucleotide sequence ID" value="NM_025813.3"/>
</dbReference>
<dbReference type="PDB" id="8R8Q">
    <property type="method" value="EM"/>
    <property type="resolution" value="4.08 A"/>
    <property type="chains" value="A=1-464"/>
</dbReference>
<dbReference type="PDBsum" id="8R8Q"/>
<dbReference type="EMDB" id="EMD-19006"/>
<dbReference type="SMR" id="Q9DC37"/>
<dbReference type="BioGRID" id="211775">
    <property type="interactions" value="2"/>
</dbReference>
<dbReference type="FunCoup" id="Q9DC37">
    <property type="interactions" value="1604"/>
</dbReference>
<dbReference type="STRING" id="10090.ENSMUSP00000029344"/>
<dbReference type="iPTMnet" id="Q9DC37"/>
<dbReference type="PhosphoSitePlus" id="Q9DC37"/>
<dbReference type="SwissPalm" id="Q9DC37"/>
<dbReference type="jPOST" id="Q9DC37"/>
<dbReference type="PaxDb" id="10090-ENSMUSP00000029344"/>
<dbReference type="PeptideAtlas" id="Q9DC37"/>
<dbReference type="ProteomicsDB" id="293464"/>
<dbReference type="Pumba" id="Q9DC37"/>
<dbReference type="Antibodypedia" id="54152">
    <property type="antibodies" value="86 antibodies from 25 providers"/>
</dbReference>
<dbReference type="DNASU" id="66868"/>
<dbReference type="Ensembl" id="ENSMUST00000029344.10">
    <property type="protein sequence ID" value="ENSMUSP00000029344.9"/>
    <property type="gene ID" value="ENSMUSG00000027775.10"/>
</dbReference>
<dbReference type="GeneID" id="66868"/>
<dbReference type="KEGG" id="mmu:66868"/>
<dbReference type="UCSC" id="uc008plp.1">
    <property type="organism name" value="mouse"/>
</dbReference>
<dbReference type="AGR" id="MGI:1914118"/>
<dbReference type="CTD" id="64747"/>
<dbReference type="MGI" id="MGI:1914118">
    <property type="gene designation" value="Mfsd1"/>
</dbReference>
<dbReference type="VEuPathDB" id="HostDB:ENSMUSG00000027775"/>
<dbReference type="eggNOG" id="KOG4686">
    <property type="taxonomic scope" value="Eukaryota"/>
</dbReference>
<dbReference type="GeneTree" id="ENSGT00390000011700"/>
<dbReference type="HOGENOM" id="CLU_024694_3_1_1"/>
<dbReference type="InParanoid" id="Q9DC37"/>
<dbReference type="OMA" id="CVLYYSA"/>
<dbReference type="OrthoDB" id="424834at2759"/>
<dbReference type="PhylomeDB" id="Q9DC37"/>
<dbReference type="TreeFam" id="TF323603"/>
<dbReference type="BioGRID-ORCS" id="66868">
    <property type="hits" value="5 hits in 78 CRISPR screens"/>
</dbReference>
<dbReference type="ChiTaRS" id="Mfsd1">
    <property type="organism name" value="mouse"/>
</dbReference>
<dbReference type="PRO" id="PR:Q9DC37"/>
<dbReference type="Proteomes" id="UP000000589">
    <property type="component" value="Chromosome 3"/>
</dbReference>
<dbReference type="RNAct" id="Q9DC37">
    <property type="molecule type" value="protein"/>
</dbReference>
<dbReference type="Bgee" id="ENSMUSG00000027775">
    <property type="expression patterns" value="Expressed in stroma of bone marrow and 266 other cell types or tissues"/>
</dbReference>
<dbReference type="GO" id="GO:0005765">
    <property type="term" value="C:lysosomal membrane"/>
    <property type="evidence" value="ECO:0000314"/>
    <property type="project" value="UniProtKB"/>
</dbReference>
<dbReference type="GO" id="GO:0005764">
    <property type="term" value="C:lysosome"/>
    <property type="evidence" value="ECO:0000314"/>
    <property type="project" value="UniProtKB"/>
</dbReference>
<dbReference type="GO" id="GO:0160178">
    <property type="term" value="F:dipeptide uniporter activity"/>
    <property type="evidence" value="ECO:0000250"/>
    <property type="project" value="UniProtKB"/>
</dbReference>
<dbReference type="GO" id="GO:0042803">
    <property type="term" value="F:protein homodimerization activity"/>
    <property type="evidence" value="ECO:0000314"/>
    <property type="project" value="UniProtKB"/>
</dbReference>
<dbReference type="GO" id="GO:0141204">
    <property type="term" value="P:dipeptide transmembrane transport from lysosomal lumen to cytosol"/>
    <property type="evidence" value="ECO:0000315"/>
    <property type="project" value="UniProtKB"/>
</dbReference>
<dbReference type="GO" id="GO:0061462">
    <property type="term" value="P:protein localization to lysosome"/>
    <property type="evidence" value="ECO:0000315"/>
    <property type="project" value="UniProtKB"/>
</dbReference>
<dbReference type="GO" id="GO:0050821">
    <property type="term" value="P:protein stabilization"/>
    <property type="evidence" value="ECO:0000315"/>
    <property type="project" value="UniProtKB"/>
</dbReference>
<dbReference type="CDD" id="cd17340">
    <property type="entry name" value="MFS_MFSD1"/>
    <property type="match status" value="1"/>
</dbReference>
<dbReference type="Gene3D" id="1.20.1250.20">
    <property type="entry name" value="MFS general substrate transporter like domains"/>
    <property type="match status" value="2"/>
</dbReference>
<dbReference type="InterPro" id="IPR011701">
    <property type="entry name" value="MFS"/>
</dbReference>
<dbReference type="InterPro" id="IPR020846">
    <property type="entry name" value="MFS_dom"/>
</dbReference>
<dbReference type="InterPro" id="IPR036259">
    <property type="entry name" value="MFS_trans_sf"/>
</dbReference>
<dbReference type="InterPro" id="IPR052187">
    <property type="entry name" value="MFSD1"/>
</dbReference>
<dbReference type="PANTHER" id="PTHR23512">
    <property type="entry name" value="MAJOR FACILITATOR SUPERFAMILY DOMAIN-CONTAINING PROTEIN 1"/>
    <property type="match status" value="1"/>
</dbReference>
<dbReference type="PANTHER" id="PTHR23512:SF3">
    <property type="entry name" value="MAJOR FACILITATOR SUPERFAMILY DOMAIN-CONTAINING PROTEIN 1"/>
    <property type="match status" value="1"/>
</dbReference>
<dbReference type="Pfam" id="PF07690">
    <property type="entry name" value="MFS_1"/>
    <property type="match status" value="1"/>
</dbReference>
<dbReference type="SUPFAM" id="SSF103473">
    <property type="entry name" value="MFS general substrate transporter"/>
    <property type="match status" value="1"/>
</dbReference>
<dbReference type="PROSITE" id="PS50850">
    <property type="entry name" value="MFS"/>
    <property type="match status" value="1"/>
</dbReference>
<protein>
    <recommendedName>
        <fullName evidence="8">Lysosomal dipeptide transporter MFSD1</fullName>
    </recommendedName>
    <alternativeName>
        <fullName evidence="9">Major facilitator superfamily domain-containing protein 1</fullName>
    </alternativeName>
</protein>